<sequence length="361" mass="40145">MSKEKILFIDRDGTLIVEPPVDFQVDRLDKLKLEPFVIPALLTLQDAGYKLVMVTNQDGLGTDSYPQADFDAPQNMMMEIFESQGVKFDDVLICPHFNEDNCSCRKPKLGLVKSYLQQGRVDFATSAVIGDRQTDLQLAENMAIKGIQYNPLPTDKSSLNWQQIVKDLTTNPRIAEVVRTTKETDIRVKVNLDETGGNSIETGLGFFDHMLDQIATHGGFQMQVNVKGDLHIDDHHSIEDTALALGQALKEALGDKRGIGRFGFSLPMDECLAQCALDLSGRPYLKFEAEFGRDQVGDLSTEMVSHFFRSLTDTLACTLHLSSTGHNDHHIVESLFKAFGRTLRQAIRVDGNELPSSKGVL</sequence>
<dbReference type="EC" id="3.1.3.15" evidence="1"/>
<dbReference type="EC" id="4.2.1.19" evidence="1"/>
<dbReference type="EMBL" id="CR378666">
    <property type="protein sequence ID" value="CAG19500.1"/>
    <property type="molecule type" value="Genomic_DNA"/>
</dbReference>
<dbReference type="RefSeq" id="WP_011217833.1">
    <property type="nucleotide sequence ID" value="NC_006370.1"/>
</dbReference>
<dbReference type="SMR" id="P62455"/>
<dbReference type="STRING" id="298386.PBPRA1089"/>
<dbReference type="KEGG" id="ppr:PBPRA1089"/>
<dbReference type="eggNOG" id="COG0131">
    <property type="taxonomic scope" value="Bacteria"/>
</dbReference>
<dbReference type="eggNOG" id="COG0241">
    <property type="taxonomic scope" value="Bacteria"/>
</dbReference>
<dbReference type="HOGENOM" id="CLU_044308_0_0_6"/>
<dbReference type="UniPathway" id="UPA00031">
    <property type="reaction ID" value="UER00011"/>
</dbReference>
<dbReference type="UniPathway" id="UPA00031">
    <property type="reaction ID" value="UER00013"/>
</dbReference>
<dbReference type="Proteomes" id="UP000000593">
    <property type="component" value="Chromosome 1"/>
</dbReference>
<dbReference type="GO" id="GO:0005737">
    <property type="term" value="C:cytoplasm"/>
    <property type="evidence" value="ECO:0007669"/>
    <property type="project" value="UniProtKB-SubCell"/>
</dbReference>
<dbReference type="GO" id="GO:0004401">
    <property type="term" value="F:histidinol-phosphatase activity"/>
    <property type="evidence" value="ECO:0007669"/>
    <property type="project" value="UniProtKB-UniRule"/>
</dbReference>
<dbReference type="GO" id="GO:0004424">
    <property type="term" value="F:imidazoleglycerol-phosphate dehydratase activity"/>
    <property type="evidence" value="ECO:0007669"/>
    <property type="project" value="UniProtKB-UniRule"/>
</dbReference>
<dbReference type="GO" id="GO:0046872">
    <property type="term" value="F:metal ion binding"/>
    <property type="evidence" value="ECO:0007669"/>
    <property type="project" value="UniProtKB-KW"/>
</dbReference>
<dbReference type="GO" id="GO:0000105">
    <property type="term" value="P:L-histidine biosynthetic process"/>
    <property type="evidence" value="ECO:0007669"/>
    <property type="project" value="UniProtKB-UniRule"/>
</dbReference>
<dbReference type="CDD" id="cd07503">
    <property type="entry name" value="HAD_HisB-N"/>
    <property type="match status" value="1"/>
</dbReference>
<dbReference type="CDD" id="cd07914">
    <property type="entry name" value="IGPD"/>
    <property type="match status" value="1"/>
</dbReference>
<dbReference type="FunFam" id="3.40.50.1000:FF:000061">
    <property type="entry name" value="Histidine biosynthesis bifunctional protein HisB"/>
    <property type="match status" value="1"/>
</dbReference>
<dbReference type="FunFam" id="3.30.230.40:FF:000001">
    <property type="entry name" value="Imidazoleglycerol-phosphate dehydratase HisB"/>
    <property type="match status" value="1"/>
</dbReference>
<dbReference type="FunFam" id="3.30.230.40:FF:000003">
    <property type="entry name" value="Imidazoleglycerol-phosphate dehydratase HisB"/>
    <property type="match status" value="1"/>
</dbReference>
<dbReference type="Gene3D" id="3.40.50.1000">
    <property type="entry name" value="HAD superfamily/HAD-like"/>
    <property type="match status" value="1"/>
</dbReference>
<dbReference type="Gene3D" id="3.30.230.40">
    <property type="entry name" value="Imidazole glycerol phosphate dehydratase, domain 1"/>
    <property type="match status" value="2"/>
</dbReference>
<dbReference type="HAMAP" id="MF_01022">
    <property type="entry name" value="Bifunc_HisB"/>
    <property type="match status" value="1"/>
</dbReference>
<dbReference type="HAMAP" id="MF_00076">
    <property type="entry name" value="HisB"/>
    <property type="match status" value="1"/>
</dbReference>
<dbReference type="InterPro" id="IPR036412">
    <property type="entry name" value="HAD-like_sf"/>
</dbReference>
<dbReference type="InterPro" id="IPR006549">
    <property type="entry name" value="HAD-SF_hydro_IIIA"/>
</dbReference>
<dbReference type="InterPro" id="IPR023214">
    <property type="entry name" value="HAD_sf"/>
</dbReference>
<dbReference type="InterPro" id="IPR020566">
    <property type="entry name" value="His_synth_bifunc_HisB"/>
</dbReference>
<dbReference type="InterPro" id="IPR005954">
    <property type="entry name" value="HisB_N"/>
</dbReference>
<dbReference type="InterPro" id="IPR006543">
    <property type="entry name" value="Histidinol-phos"/>
</dbReference>
<dbReference type="InterPro" id="IPR038494">
    <property type="entry name" value="IGPD_sf"/>
</dbReference>
<dbReference type="InterPro" id="IPR000807">
    <property type="entry name" value="ImidazoleglycerolP_deHydtase"/>
</dbReference>
<dbReference type="InterPro" id="IPR020565">
    <property type="entry name" value="ImidazoleglycerP_deHydtase_CS"/>
</dbReference>
<dbReference type="InterPro" id="IPR013954">
    <property type="entry name" value="PNK3P"/>
</dbReference>
<dbReference type="InterPro" id="IPR020568">
    <property type="entry name" value="Ribosomal_Su5_D2-typ_SF"/>
</dbReference>
<dbReference type="NCBIfam" id="TIGR01662">
    <property type="entry name" value="HAD-SF-IIIA"/>
    <property type="match status" value="1"/>
</dbReference>
<dbReference type="NCBIfam" id="TIGR01261">
    <property type="entry name" value="hisB_Nterm"/>
    <property type="match status" value="1"/>
</dbReference>
<dbReference type="NCBIfam" id="TIGR01656">
    <property type="entry name" value="Histidinol-ppas"/>
    <property type="match status" value="1"/>
</dbReference>
<dbReference type="NCBIfam" id="NF002111">
    <property type="entry name" value="PRK00951.2-1"/>
    <property type="match status" value="1"/>
</dbReference>
<dbReference type="NCBIfam" id="NF002114">
    <property type="entry name" value="PRK00951.2-4"/>
    <property type="match status" value="1"/>
</dbReference>
<dbReference type="NCBIfam" id="NF003937">
    <property type="entry name" value="PRK05446.1"/>
    <property type="match status" value="1"/>
</dbReference>
<dbReference type="PANTHER" id="PTHR23133:SF2">
    <property type="entry name" value="IMIDAZOLEGLYCEROL-PHOSPHATE DEHYDRATASE"/>
    <property type="match status" value="1"/>
</dbReference>
<dbReference type="PANTHER" id="PTHR23133">
    <property type="entry name" value="IMIDAZOLEGLYCEROL-PHOSPHATE DEHYDRATASE HIS7"/>
    <property type="match status" value="1"/>
</dbReference>
<dbReference type="Pfam" id="PF00475">
    <property type="entry name" value="IGPD"/>
    <property type="match status" value="1"/>
</dbReference>
<dbReference type="Pfam" id="PF08645">
    <property type="entry name" value="PNK3P"/>
    <property type="match status" value="1"/>
</dbReference>
<dbReference type="SUPFAM" id="SSF56784">
    <property type="entry name" value="HAD-like"/>
    <property type="match status" value="1"/>
</dbReference>
<dbReference type="SUPFAM" id="SSF54211">
    <property type="entry name" value="Ribosomal protein S5 domain 2-like"/>
    <property type="match status" value="2"/>
</dbReference>
<dbReference type="PROSITE" id="PS00954">
    <property type="entry name" value="IGP_DEHYDRATASE_1"/>
    <property type="match status" value="1"/>
</dbReference>
<dbReference type="PROSITE" id="PS00955">
    <property type="entry name" value="IGP_DEHYDRATASE_2"/>
    <property type="match status" value="1"/>
</dbReference>
<comment type="catalytic activity">
    <reaction evidence="1">
        <text>D-erythro-1-(imidazol-4-yl)glycerol 3-phosphate = 3-(imidazol-4-yl)-2-oxopropyl phosphate + H2O</text>
        <dbReference type="Rhea" id="RHEA:11040"/>
        <dbReference type="ChEBI" id="CHEBI:15377"/>
        <dbReference type="ChEBI" id="CHEBI:57766"/>
        <dbReference type="ChEBI" id="CHEBI:58278"/>
        <dbReference type="EC" id="4.2.1.19"/>
    </reaction>
</comment>
<comment type="catalytic activity">
    <reaction evidence="1">
        <text>L-histidinol phosphate + H2O = L-histidinol + phosphate</text>
        <dbReference type="Rhea" id="RHEA:14465"/>
        <dbReference type="ChEBI" id="CHEBI:15377"/>
        <dbReference type="ChEBI" id="CHEBI:43474"/>
        <dbReference type="ChEBI" id="CHEBI:57699"/>
        <dbReference type="ChEBI" id="CHEBI:57980"/>
        <dbReference type="EC" id="3.1.3.15"/>
    </reaction>
</comment>
<comment type="cofactor">
    <cofactor evidence="1">
        <name>Mg(2+)</name>
        <dbReference type="ChEBI" id="CHEBI:18420"/>
    </cofactor>
</comment>
<comment type="cofactor">
    <cofactor evidence="1">
        <name>Zn(2+)</name>
        <dbReference type="ChEBI" id="CHEBI:29105"/>
    </cofactor>
</comment>
<comment type="pathway">
    <text evidence="1">Amino-acid biosynthesis; L-histidine biosynthesis; L-histidine from 5-phospho-alpha-D-ribose 1-diphosphate: step 6/9.</text>
</comment>
<comment type="pathway">
    <text evidence="1">Amino-acid biosynthesis; L-histidine biosynthesis; L-histidine from 5-phospho-alpha-D-ribose 1-diphosphate: step 8/9.</text>
</comment>
<comment type="subcellular location">
    <subcellularLocation>
        <location evidence="1">Cytoplasm</location>
    </subcellularLocation>
</comment>
<comment type="similarity">
    <text evidence="1">In the N-terminal section; belongs to the histidinol-phosphatase family.</text>
</comment>
<comment type="similarity">
    <text evidence="1">In the C-terminal section; belongs to the imidazoleglycerol-phosphate dehydratase family.</text>
</comment>
<name>HIS7_PHOPR</name>
<protein>
    <recommendedName>
        <fullName evidence="1">Histidine biosynthesis bifunctional protein HisB</fullName>
    </recommendedName>
    <domain>
        <recommendedName>
            <fullName evidence="1">Histidinol-phosphatase</fullName>
            <ecNumber evidence="1">3.1.3.15</ecNumber>
        </recommendedName>
    </domain>
    <domain>
        <recommendedName>
            <fullName evidence="1">Imidazoleglycerol-phosphate dehydratase</fullName>
            <shortName evidence="1">IGPD</shortName>
            <ecNumber evidence="1">4.2.1.19</ecNumber>
        </recommendedName>
    </domain>
</protein>
<keyword id="KW-0028">Amino-acid biosynthesis</keyword>
<keyword id="KW-0963">Cytoplasm</keyword>
<keyword id="KW-0368">Histidine biosynthesis</keyword>
<keyword id="KW-0378">Hydrolase</keyword>
<keyword id="KW-0456">Lyase</keyword>
<keyword id="KW-0460">Magnesium</keyword>
<keyword id="KW-0479">Metal-binding</keyword>
<keyword id="KW-0511">Multifunctional enzyme</keyword>
<keyword id="KW-1185">Reference proteome</keyword>
<keyword id="KW-0862">Zinc</keyword>
<reference key="1">
    <citation type="journal article" date="2005" name="Science">
        <title>Life at depth: Photobacterium profundum genome sequence and expression analysis.</title>
        <authorList>
            <person name="Vezzi A."/>
            <person name="Campanaro S."/>
            <person name="D'Angelo M."/>
            <person name="Simonato F."/>
            <person name="Vitulo N."/>
            <person name="Lauro F.M."/>
            <person name="Cestaro A."/>
            <person name="Malacrida G."/>
            <person name="Simionati B."/>
            <person name="Cannata N."/>
            <person name="Romualdi C."/>
            <person name="Bartlett D.H."/>
            <person name="Valle G."/>
        </authorList>
    </citation>
    <scope>NUCLEOTIDE SEQUENCE [LARGE SCALE GENOMIC DNA]</scope>
    <source>
        <strain>ATCC BAA-1253 / SS9</strain>
    </source>
</reference>
<proteinExistence type="inferred from homology"/>
<feature type="chain" id="PRO_0000158217" description="Histidine biosynthesis bifunctional protein HisB">
    <location>
        <begin position="1"/>
        <end position="361"/>
    </location>
</feature>
<feature type="region of interest" description="Histidinol-phosphatase" evidence="1">
    <location>
        <begin position="1"/>
        <end position="172"/>
    </location>
</feature>
<feature type="region of interest" description="Imidazoleglycerol-phosphate dehydratase" evidence="1">
    <location>
        <begin position="173"/>
        <end position="361"/>
    </location>
</feature>
<feature type="active site" description="Nucleophile" evidence="1">
    <location>
        <position position="10"/>
    </location>
</feature>
<feature type="active site" description="Proton donor" evidence="1">
    <location>
        <position position="12"/>
    </location>
</feature>
<feature type="binding site" evidence="1">
    <location>
        <position position="10"/>
    </location>
    <ligand>
        <name>Mg(2+)</name>
        <dbReference type="ChEBI" id="CHEBI:18420"/>
    </ligand>
</feature>
<feature type="binding site" evidence="1">
    <location>
        <position position="12"/>
    </location>
    <ligand>
        <name>Mg(2+)</name>
        <dbReference type="ChEBI" id="CHEBI:18420"/>
    </ligand>
</feature>
<feature type="binding site" evidence="1">
    <location>
        <position position="94"/>
    </location>
    <ligand>
        <name>Zn(2+)</name>
        <dbReference type="ChEBI" id="CHEBI:29105"/>
    </ligand>
</feature>
<feature type="binding site" evidence="1">
    <location>
        <position position="96"/>
    </location>
    <ligand>
        <name>Zn(2+)</name>
        <dbReference type="ChEBI" id="CHEBI:29105"/>
    </ligand>
</feature>
<feature type="binding site" evidence="1">
    <location>
        <position position="102"/>
    </location>
    <ligand>
        <name>Zn(2+)</name>
        <dbReference type="ChEBI" id="CHEBI:29105"/>
    </ligand>
</feature>
<feature type="binding site" evidence="1">
    <location>
        <position position="104"/>
    </location>
    <ligand>
        <name>Zn(2+)</name>
        <dbReference type="ChEBI" id="CHEBI:29105"/>
    </ligand>
</feature>
<feature type="binding site" evidence="1">
    <location>
        <position position="131"/>
    </location>
    <ligand>
        <name>Mg(2+)</name>
        <dbReference type="ChEBI" id="CHEBI:18420"/>
    </ligand>
</feature>
<organism>
    <name type="scientific">Photobacterium profundum (strain SS9)</name>
    <dbReference type="NCBI Taxonomy" id="298386"/>
    <lineage>
        <taxon>Bacteria</taxon>
        <taxon>Pseudomonadati</taxon>
        <taxon>Pseudomonadota</taxon>
        <taxon>Gammaproteobacteria</taxon>
        <taxon>Vibrionales</taxon>
        <taxon>Vibrionaceae</taxon>
        <taxon>Photobacterium</taxon>
    </lineage>
</organism>
<evidence type="ECO:0000255" key="1">
    <source>
        <dbReference type="HAMAP-Rule" id="MF_01022"/>
    </source>
</evidence>
<accession>P62455</accession>
<gene>
    <name evidence="1" type="primary">hisB</name>
    <name type="ordered locus">PBPRA1089</name>
</gene>